<reference key="1">
    <citation type="journal article" date="1990" name="J. Bacteriol.">
        <title>Morganella morganii urease: purification, characterization, and isolation of gene sequences.</title>
        <authorList>
            <person name="Hu L.-T."/>
            <person name="Nicholson E.B."/>
            <person name="Jones B.D."/>
            <person name="Lynch M.J."/>
            <person name="Mobley H.L.T."/>
        </authorList>
    </citation>
    <scope>PROTEIN SEQUENCE</scope>
</reference>
<feature type="chain" id="PRO_0000098018" description="Urease subunit gamma">
    <location>
        <begin position="1"/>
        <end position="10" status="greater than"/>
    </location>
</feature>
<feature type="non-terminal residue">
    <location>
        <position position="10"/>
    </location>
</feature>
<name>URE3_MORMO</name>
<gene>
    <name type="primary">ureA</name>
</gene>
<keyword id="KW-0963">Cytoplasm</keyword>
<keyword id="KW-0903">Direct protein sequencing</keyword>
<keyword id="KW-0378">Hydrolase</keyword>
<sequence length="10" mass="1171">MQLTPPEVEK</sequence>
<protein>
    <recommendedName>
        <fullName>Urease subunit gamma</fullName>
        <ecNumber>3.5.1.5</ecNumber>
    </recommendedName>
    <alternativeName>
        <fullName>Urea amidohydrolase subunit gamma</fullName>
    </alternativeName>
    <alternativeName>
        <fullName>Urease 6 kDa subunit</fullName>
    </alternativeName>
</protein>
<proteinExistence type="evidence at protein level"/>
<organism>
    <name type="scientific">Morganella morganii</name>
    <name type="common">Proteus morganii</name>
    <dbReference type="NCBI Taxonomy" id="582"/>
    <lineage>
        <taxon>Bacteria</taxon>
        <taxon>Pseudomonadati</taxon>
        <taxon>Pseudomonadota</taxon>
        <taxon>Gammaproteobacteria</taxon>
        <taxon>Enterobacterales</taxon>
        <taxon>Morganellaceae</taxon>
        <taxon>Morganella</taxon>
    </lineage>
</organism>
<comment type="catalytic activity">
    <reaction>
        <text>urea + 2 H2O + H(+) = hydrogencarbonate + 2 NH4(+)</text>
        <dbReference type="Rhea" id="RHEA:20557"/>
        <dbReference type="ChEBI" id="CHEBI:15377"/>
        <dbReference type="ChEBI" id="CHEBI:15378"/>
        <dbReference type="ChEBI" id="CHEBI:16199"/>
        <dbReference type="ChEBI" id="CHEBI:17544"/>
        <dbReference type="ChEBI" id="CHEBI:28938"/>
        <dbReference type="EC" id="3.5.1.5"/>
    </reaction>
</comment>
<comment type="pathway">
    <text>Nitrogen metabolism; urea degradation; CO(2) and NH(3) from urea (urease route): step 1/1.</text>
</comment>
<comment type="subunit">
    <text evidence="1">Heterotrimer of UreA (gamma), UreB (beta) and UreC (alpha) subunits. Three heterotrimers associate to form the active enzyme (By similarity).</text>
</comment>
<comment type="subcellular location">
    <subcellularLocation>
        <location evidence="1">Cytoplasm</location>
    </subcellularLocation>
</comment>
<comment type="similarity">
    <text evidence="2">Belongs to the urease gamma subunit family.</text>
</comment>
<accession>P17339</accession>
<evidence type="ECO:0000250" key="1"/>
<evidence type="ECO:0000305" key="2"/>
<dbReference type="EC" id="3.5.1.5"/>
<dbReference type="PIR" id="C35389">
    <property type="entry name" value="C35389"/>
</dbReference>
<dbReference type="UniPathway" id="UPA00258">
    <property type="reaction ID" value="UER00370"/>
</dbReference>
<dbReference type="GO" id="GO:0005737">
    <property type="term" value="C:cytoplasm"/>
    <property type="evidence" value="ECO:0007669"/>
    <property type="project" value="UniProtKB-SubCell"/>
</dbReference>
<dbReference type="GO" id="GO:0009039">
    <property type="term" value="F:urease activity"/>
    <property type="evidence" value="ECO:0007669"/>
    <property type="project" value="UniProtKB-EC"/>
</dbReference>
<dbReference type="GO" id="GO:0043419">
    <property type="term" value="P:urea catabolic process"/>
    <property type="evidence" value="ECO:0007669"/>
    <property type="project" value="UniProtKB-UniPathway"/>
</dbReference>